<reference key="1">
    <citation type="journal article" date="1996" name="Cell">
        <title>X-MyT1, a Xenopus C2HC-type zinc finger protein with a regulatory function in neuronal differentiation.</title>
        <authorList>
            <person name="Bellefroid E.J."/>
            <person name="Bourguignon C."/>
            <person name="Hollemann T."/>
            <person name="Ma Q."/>
            <person name="Anderson D.J."/>
            <person name="Kintner C."/>
            <person name="Pieler T."/>
        </authorList>
    </citation>
    <scope>NUCLEOTIDE SEQUENCE [MRNA]</scope>
    <scope>FUNCTION</scope>
    <scope>INDUCTION</scope>
    <scope>DEVELOPMENTAL STAGE</scope>
</reference>
<sequence length="1122" mass="123862">MNVDNVNKGTHTRSKASRVIPSDLIEQEVSLESCPLSRKRKLQESEQENPLSKRKSHPLKLALDEGFNVDSNGSEETEMKERDSGTEESEATLEEIEEDSEPTKPKEAPSPQTAEAESSDKVEPEETETKTESSPPAKATYSSYHEIIANSLLNLGQVAKEALVSEGHLKESELNNEKPTSVKSGQAEIEQLMVEEACEKEIIIQTEDAEEVIEVTSEPISESGTEPRDEVNCEDTEKLQKDMIDEEEEEEDDDVDEEDDDDLEEDEEEEEEHSSEMANQDLPHASQDSPKPHCEGHFSPKPEYSVIVEVRSDDDKDDDSHSQKSAVTDESEMYDMMTRGNLGLLEQAIALKAEQVKVVREPSRSSLDNMKNFSADEKQNRPIDTMRKSFYDAGRPEKRDIKCPTPGCDGTGHVTGLYPHHRSLSGCPHKDRIPPEILAMHENVLKCPTPGCTGQGHVNSNRNTHRSLSGCPIAAAEKLTRSHEKQQQPGDLSKSSSNSDRILRPMCFVKQLEIPQYGSYRPNMAPATPRANLAKELEKYSKVTFDYASFDAQVFGKRLLAPKIPSSETSPKAFKSKPFPKASSPCHSPSSSYIKSTSSSSSSGFDYTHDAEAAHMAATAILNLSTRCWEMPENLSTKQQDTPSKSSEIEVDENGTLDLSMNKHRKRESTFPSSSSCSSSPSMKSPDQSQRQNCTSATSSNMTSPHSSQTSRQDDWDGPIDYTKPNRQREEEPEEMEPAAASFASSEVDEQEMQEMQEMQEMQEESYEDRKYPGDVTLTNFKLKFLSKDSKKELLSCPTPGCDGSGHITGNYASHRSLSGCPLADKSLRNLMAAHSADLKCPTPGCDGSGHITGNYASHRSLSGCPRAKKSGLKITPTKDDKDDPDLMKCPVPGCDGLGHISGKYASHRSASGCPLAARRQKEGALNGSAFSWKSLKTEGPSCPTPGCDGSGHANGSFLTHRSLSGCPRASFAGKKGKISGDELLGTNFKTSDVLENDEEIKQLNKEINELNESNSEMEADMVNLQSQITTMEKNLKNIEEENKVIEEQNEALFVELSGLSQALIRSLTNIRLPQMEPISEQNFDAYVNTLTDMYTNQECYQNPENKALLESIKQAVKGIKV</sequence>
<evidence type="ECO:0000255" key="1">
    <source>
        <dbReference type="PROSITE-ProRule" id="PRU01143"/>
    </source>
</evidence>
<evidence type="ECO:0000256" key="2">
    <source>
        <dbReference type="SAM" id="MobiDB-lite"/>
    </source>
</evidence>
<evidence type="ECO:0000269" key="3">
    <source>
    </source>
</evidence>
<evidence type="ECO:0000305" key="4"/>
<name>MYT1_XENLA</name>
<gene>
    <name type="primary">myt1</name>
</gene>
<dbReference type="EMBL" id="U67078">
    <property type="protein sequence ID" value="AAB40719.1"/>
    <property type="molecule type" value="mRNA"/>
</dbReference>
<dbReference type="RefSeq" id="NP_001081661.1">
    <property type="nucleotide sequence ID" value="NM_001088192.1"/>
</dbReference>
<dbReference type="SMR" id="P70047"/>
<dbReference type="GeneID" id="397982"/>
<dbReference type="KEGG" id="xla:397982"/>
<dbReference type="AGR" id="Xenbase:XB-GENE-1009978"/>
<dbReference type="CTD" id="397982"/>
<dbReference type="Xenbase" id="XB-GENE-1009978">
    <property type="gene designation" value="myt1.S"/>
</dbReference>
<dbReference type="OrthoDB" id="10069059at2759"/>
<dbReference type="Proteomes" id="UP000186698">
    <property type="component" value="Chromosome 9_10S"/>
</dbReference>
<dbReference type="Bgee" id="397982">
    <property type="expression patterns" value="Expressed in neurula embryo and 4 other cell types or tissues"/>
</dbReference>
<dbReference type="GO" id="GO:0005634">
    <property type="term" value="C:nucleus"/>
    <property type="evidence" value="ECO:0000318"/>
    <property type="project" value="GO_Central"/>
</dbReference>
<dbReference type="GO" id="GO:0000981">
    <property type="term" value="F:DNA-binding transcription factor activity, RNA polymerase II-specific"/>
    <property type="evidence" value="ECO:0000318"/>
    <property type="project" value="GO_Central"/>
</dbReference>
<dbReference type="GO" id="GO:0000978">
    <property type="term" value="F:RNA polymerase II cis-regulatory region sequence-specific DNA binding"/>
    <property type="evidence" value="ECO:0000318"/>
    <property type="project" value="GO_Central"/>
</dbReference>
<dbReference type="GO" id="GO:0008270">
    <property type="term" value="F:zinc ion binding"/>
    <property type="evidence" value="ECO:0007669"/>
    <property type="project" value="UniProtKB-KW"/>
</dbReference>
<dbReference type="GO" id="GO:0030154">
    <property type="term" value="P:cell differentiation"/>
    <property type="evidence" value="ECO:0007669"/>
    <property type="project" value="UniProtKB-KW"/>
</dbReference>
<dbReference type="GO" id="GO:0007399">
    <property type="term" value="P:nervous system development"/>
    <property type="evidence" value="ECO:0007669"/>
    <property type="project" value="UniProtKB-KW"/>
</dbReference>
<dbReference type="GO" id="GO:0006357">
    <property type="term" value="P:regulation of transcription by RNA polymerase II"/>
    <property type="evidence" value="ECO:0000318"/>
    <property type="project" value="GO_Central"/>
</dbReference>
<dbReference type="FunFam" id="4.10.320.30:FF:000001">
    <property type="entry name" value="Myelin transcription factor 1-like, a"/>
    <property type="match status" value="6"/>
</dbReference>
<dbReference type="Gene3D" id="4.10.320.30">
    <property type="match status" value="6"/>
</dbReference>
<dbReference type="InterPro" id="IPR013681">
    <property type="entry name" value="Myelin_TF"/>
</dbReference>
<dbReference type="InterPro" id="IPR002515">
    <property type="entry name" value="Znf_C2H2C"/>
</dbReference>
<dbReference type="InterPro" id="IPR036060">
    <property type="entry name" value="Znf_C2H2C_sf"/>
</dbReference>
<dbReference type="PANTHER" id="PTHR10816:SF10">
    <property type="entry name" value="MYELIN TRANSCRIPTION FACTOR 1"/>
    <property type="match status" value="1"/>
</dbReference>
<dbReference type="PANTHER" id="PTHR10816">
    <property type="entry name" value="MYELIN TRANSCRIPTION FACTOR 1-RELATED"/>
    <property type="match status" value="1"/>
</dbReference>
<dbReference type="Pfam" id="PF08474">
    <property type="entry name" value="MYT1"/>
    <property type="match status" value="1"/>
</dbReference>
<dbReference type="Pfam" id="PF01530">
    <property type="entry name" value="zf-C2HC"/>
    <property type="match status" value="6"/>
</dbReference>
<dbReference type="SUPFAM" id="SSF103637">
    <property type="entry name" value="CCHHC domain"/>
    <property type="match status" value="6"/>
</dbReference>
<dbReference type="PROSITE" id="PS51802">
    <property type="entry name" value="ZF_CCHHC"/>
    <property type="match status" value="6"/>
</dbReference>
<feature type="chain" id="PRO_0000096678" description="Myelin transcription factor 1">
    <location>
        <begin position="1"/>
        <end position="1122"/>
    </location>
</feature>
<feature type="zinc finger region" description="CCHHC-type 1" evidence="1">
    <location>
        <begin position="394"/>
        <end position="437"/>
    </location>
</feature>
<feature type="zinc finger region" description="CCHHC-type 2" evidence="1">
    <location>
        <begin position="438"/>
        <end position="481"/>
    </location>
</feature>
<feature type="zinc finger region" description="CCHHC-type 3" evidence="1">
    <location>
        <begin position="788"/>
        <end position="831"/>
    </location>
</feature>
<feature type="zinc finger region" description="CCHHC-type 4" evidence="1">
    <location>
        <begin position="832"/>
        <end position="875"/>
    </location>
</feature>
<feature type="zinc finger region" description="CCHHC-type 5" evidence="1">
    <location>
        <begin position="881"/>
        <end position="924"/>
    </location>
</feature>
<feature type="zinc finger region" description="CCHHC-type 6" evidence="1">
    <location>
        <begin position="934"/>
        <end position="977"/>
    </location>
</feature>
<feature type="region of interest" description="Disordered" evidence="2">
    <location>
        <begin position="1"/>
        <end position="139"/>
    </location>
</feature>
<feature type="region of interest" description="Disordered" evidence="2">
    <location>
        <begin position="208"/>
        <end position="334"/>
    </location>
</feature>
<feature type="region of interest" description="Disordered" evidence="2">
    <location>
        <begin position="479"/>
        <end position="499"/>
    </location>
</feature>
<feature type="region of interest" description="Disordered" evidence="2">
    <location>
        <begin position="566"/>
        <end position="595"/>
    </location>
</feature>
<feature type="region of interest" description="Disordered" evidence="2">
    <location>
        <begin position="634"/>
        <end position="770"/>
    </location>
</feature>
<feature type="compositionally biased region" description="Acidic residues" evidence="2">
    <location>
        <begin position="86"/>
        <end position="100"/>
    </location>
</feature>
<feature type="compositionally biased region" description="Basic and acidic residues" evidence="2">
    <location>
        <begin position="118"/>
        <end position="131"/>
    </location>
</feature>
<feature type="compositionally biased region" description="Basic and acidic residues" evidence="2">
    <location>
        <begin position="225"/>
        <end position="243"/>
    </location>
</feature>
<feature type="compositionally biased region" description="Acidic residues" evidence="2">
    <location>
        <begin position="244"/>
        <end position="273"/>
    </location>
</feature>
<feature type="compositionally biased region" description="Basic and acidic residues" evidence="2">
    <location>
        <begin position="290"/>
        <end position="300"/>
    </location>
</feature>
<feature type="compositionally biased region" description="Basic and acidic residues" evidence="2">
    <location>
        <begin position="310"/>
        <end position="322"/>
    </location>
</feature>
<feature type="compositionally biased region" description="Polar residues" evidence="2">
    <location>
        <begin position="487"/>
        <end position="499"/>
    </location>
</feature>
<feature type="compositionally biased region" description="Low complexity" evidence="2">
    <location>
        <begin position="570"/>
        <end position="595"/>
    </location>
</feature>
<feature type="compositionally biased region" description="Polar residues" evidence="2">
    <location>
        <begin position="634"/>
        <end position="646"/>
    </location>
</feature>
<feature type="compositionally biased region" description="Low complexity" evidence="2">
    <location>
        <begin position="670"/>
        <end position="689"/>
    </location>
</feature>
<feature type="compositionally biased region" description="Polar residues" evidence="2">
    <location>
        <begin position="690"/>
        <end position="711"/>
    </location>
</feature>
<feature type="binding site" evidence="1">
    <location>
        <position position="403"/>
    </location>
    <ligand>
        <name>Zn(2+)</name>
        <dbReference type="ChEBI" id="CHEBI:29105"/>
        <label>1</label>
    </ligand>
</feature>
<feature type="binding site" evidence="1">
    <location>
        <position position="408"/>
    </location>
    <ligand>
        <name>Zn(2+)</name>
        <dbReference type="ChEBI" id="CHEBI:29105"/>
        <label>1</label>
    </ligand>
</feature>
<feature type="binding site" evidence="1">
    <location>
        <position position="421"/>
    </location>
    <ligand>
        <name>Zn(2+)</name>
        <dbReference type="ChEBI" id="CHEBI:29105"/>
        <label>1</label>
    </ligand>
</feature>
<feature type="binding site" evidence="1">
    <location>
        <position position="427"/>
    </location>
    <ligand>
        <name>Zn(2+)</name>
        <dbReference type="ChEBI" id="CHEBI:29105"/>
        <label>1</label>
    </ligand>
</feature>
<feature type="binding site" evidence="1">
    <location>
        <position position="447"/>
    </location>
    <ligand>
        <name>Zn(2+)</name>
        <dbReference type="ChEBI" id="CHEBI:29105"/>
        <label>2</label>
    </ligand>
</feature>
<feature type="binding site" evidence="1">
    <location>
        <position position="452"/>
    </location>
    <ligand>
        <name>Zn(2+)</name>
        <dbReference type="ChEBI" id="CHEBI:29105"/>
        <label>2</label>
    </ligand>
</feature>
<feature type="binding site" evidence="1">
    <location>
        <position position="465"/>
    </location>
    <ligand>
        <name>Zn(2+)</name>
        <dbReference type="ChEBI" id="CHEBI:29105"/>
        <label>2</label>
    </ligand>
</feature>
<feature type="binding site" evidence="1">
    <location>
        <position position="471"/>
    </location>
    <ligand>
        <name>Zn(2+)</name>
        <dbReference type="ChEBI" id="CHEBI:29105"/>
        <label>2</label>
    </ligand>
</feature>
<feature type="binding site" evidence="1">
    <location>
        <position position="797"/>
    </location>
    <ligand>
        <name>Zn(2+)</name>
        <dbReference type="ChEBI" id="CHEBI:29105"/>
        <label>3</label>
    </ligand>
</feature>
<feature type="binding site" evidence="1">
    <location>
        <position position="802"/>
    </location>
    <ligand>
        <name>Zn(2+)</name>
        <dbReference type="ChEBI" id="CHEBI:29105"/>
        <label>3</label>
    </ligand>
</feature>
<feature type="binding site" evidence="1">
    <location>
        <position position="815"/>
    </location>
    <ligand>
        <name>Zn(2+)</name>
        <dbReference type="ChEBI" id="CHEBI:29105"/>
        <label>3</label>
    </ligand>
</feature>
<feature type="binding site" evidence="1">
    <location>
        <position position="821"/>
    </location>
    <ligand>
        <name>Zn(2+)</name>
        <dbReference type="ChEBI" id="CHEBI:29105"/>
        <label>3</label>
    </ligand>
</feature>
<feature type="binding site" evidence="1">
    <location>
        <position position="841"/>
    </location>
    <ligand>
        <name>Zn(2+)</name>
        <dbReference type="ChEBI" id="CHEBI:29105"/>
        <label>4</label>
    </ligand>
</feature>
<feature type="binding site" evidence="1">
    <location>
        <position position="846"/>
    </location>
    <ligand>
        <name>Zn(2+)</name>
        <dbReference type="ChEBI" id="CHEBI:29105"/>
        <label>4</label>
    </ligand>
</feature>
<feature type="binding site" evidence="1">
    <location>
        <position position="859"/>
    </location>
    <ligand>
        <name>Zn(2+)</name>
        <dbReference type="ChEBI" id="CHEBI:29105"/>
        <label>4</label>
    </ligand>
</feature>
<feature type="binding site" evidence="1">
    <location>
        <position position="865"/>
    </location>
    <ligand>
        <name>Zn(2+)</name>
        <dbReference type="ChEBI" id="CHEBI:29105"/>
        <label>4</label>
    </ligand>
</feature>
<feature type="binding site" evidence="1">
    <location>
        <position position="890"/>
    </location>
    <ligand>
        <name>Zn(2+)</name>
        <dbReference type="ChEBI" id="CHEBI:29105"/>
        <label>5</label>
    </ligand>
</feature>
<feature type="binding site" evidence="1">
    <location>
        <position position="895"/>
    </location>
    <ligand>
        <name>Zn(2+)</name>
        <dbReference type="ChEBI" id="CHEBI:29105"/>
        <label>5</label>
    </ligand>
</feature>
<feature type="binding site" evidence="1">
    <location>
        <position position="908"/>
    </location>
    <ligand>
        <name>Zn(2+)</name>
        <dbReference type="ChEBI" id="CHEBI:29105"/>
        <label>5</label>
    </ligand>
</feature>
<feature type="binding site" evidence="1">
    <location>
        <position position="914"/>
    </location>
    <ligand>
        <name>Zn(2+)</name>
        <dbReference type="ChEBI" id="CHEBI:29105"/>
        <label>5</label>
    </ligand>
</feature>
<feature type="binding site" evidence="1">
    <location>
        <position position="943"/>
    </location>
    <ligand>
        <name>Zn(2+)</name>
        <dbReference type="ChEBI" id="CHEBI:29105"/>
        <label>6</label>
    </ligand>
</feature>
<feature type="binding site" evidence="1">
    <location>
        <position position="948"/>
    </location>
    <ligand>
        <name>Zn(2+)</name>
        <dbReference type="ChEBI" id="CHEBI:29105"/>
        <label>6</label>
    </ligand>
</feature>
<feature type="binding site" evidence="1">
    <location>
        <position position="961"/>
    </location>
    <ligand>
        <name>Zn(2+)</name>
        <dbReference type="ChEBI" id="CHEBI:29105"/>
        <label>6</label>
    </ligand>
</feature>
<feature type="binding site" evidence="1">
    <location>
        <position position="967"/>
    </location>
    <ligand>
        <name>Zn(2+)</name>
        <dbReference type="ChEBI" id="CHEBI:29105"/>
        <label>6</label>
    </ligand>
</feature>
<protein>
    <recommendedName>
        <fullName>Myelin transcription factor 1</fullName>
        <shortName>X-MyT1</shortName>
    </recommendedName>
</protein>
<comment type="function">
    <text evidence="3">Transcriptional activator which is essential for neuronal differentiation. Can promote ectotopic neuronal differentiation and confers insensitivity to lateral inhibition, but only in cooperation with bHLH transcription factors.</text>
</comment>
<comment type="subcellular location">
    <subcellularLocation>
        <location evidence="4">Nucleus</location>
    </subcellularLocation>
</comment>
<comment type="developmental stage">
    <text evidence="3">First expressed at mid-late gastrulation within the dorsal ectoderm. By the completion of gastrulation its expression is clearly restricted to 3 groups of cells arranged in a radially symmetrical pattern on either side of the dorsal midline of the posterior neural plate, where the ventral, intermediate and dorsal groups of cells differentiate into motor neurons, interneurons and sensory neurons respectively. The same pattern of expression is maintained in later-stage neurula embryos.</text>
</comment>
<comment type="induction">
    <text evidence="3">Positively regulated by X-NGNR-1 and negatively regulated by lateral inhibition.</text>
</comment>
<comment type="similarity">
    <text evidence="4">Belongs to the MYT1 family.</text>
</comment>
<proteinExistence type="evidence at transcript level"/>
<organism>
    <name type="scientific">Xenopus laevis</name>
    <name type="common">African clawed frog</name>
    <dbReference type="NCBI Taxonomy" id="8355"/>
    <lineage>
        <taxon>Eukaryota</taxon>
        <taxon>Metazoa</taxon>
        <taxon>Chordata</taxon>
        <taxon>Craniata</taxon>
        <taxon>Vertebrata</taxon>
        <taxon>Euteleostomi</taxon>
        <taxon>Amphibia</taxon>
        <taxon>Batrachia</taxon>
        <taxon>Anura</taxon>
        <taxon>Pipoidea</taxon>
        <taxon>Pipidae</taxon>
        <taxon>Xenopodinae</taxon>
        <taxon>Xenopus</taxon>
        <taxon>Xenopus</taxon>
    </lineage>
</organism>
<keyword id="KW-0010">Activator</keyword>
<keyword id="KW-0217">Developmental protein</keyword>
<keyword id="KW-0221">Differentiation</keyword>
<keyword id="KW-0238">DNA-binding</keyword>
<keyword id="KW-0479">Metal-binding</keyword>
<keyword id="KW-0524">Neurogenesis</keyword>
<keyword id="KW-0539">Nucleus</keyword>
<keyword id="KW-1185">Reference proteome</keyword>
<keyword id="KW-0677">Repeat</keyword>
<keyword id="KW-0804">Transcription</keyword>
<keyword id="KW-0805">Transcription regulation</keyword>
<keyword id="KW-0862">Zinc</keyword>
<keyword id="KW-0863">Zinc-finger</keyword>
<accession>P70047</accession>